<evidence type="ECO:0000255" key="1">
    <source>
        <dbReference type="HAMAP-Rule" id="MF_00429"/>
    </source>
</evidence>
<name>NQRE_HAEDU</name>
<feature type="chain" id="PRO_0000214251" description="Na(+)-translocating NADH-quinone reductase subunit E">
    <location>
        <begin position="1"/>
        <end position="198"/>
    </location>
</feature>
<feature type="transmembrane region" description="Helical" evidence="1">
    <location>
        <begin position="11"/>
        <end position="31"/>
    </location>
</feature>
<feature type="transmembrane region" description="Helical" evidence="1">
    <location>
        <begin position="35"/>
        <end position="55"/>
    </location>
</feature>
<feature type="transmembrane region" description="Helical" evidence="1">
    <location>
        <begin position="77"/>
        <end position="97"/>
    </location>
</feature>
<feature type="transmembrane region" description="Helical" evidence="1">
    <location>
        <begin position="110"/>
        <end position="130"/>
    </location>
</feature>
<feature type="transmembrane region" description="Helical" evidence="1">
    <location>
        <begin position="140"/>
        <end position="160"/>
    </location>
</feature>
<feature type="transmembrane region" description="Helical" evidence="1">
    <location>
        <begin position="176"/>
        <end position="196"/>
    </location>
</feature>
<accession>Q7VNU5</accession>
<gene>
    <name evidence="1" type="primary">nqrE</name>
    <name type="ordered locus">HD_0383</name>
</gene>
<dbReference type="EC" id="7.2.1.1" evidence="1"/>
<dbReference type="EMBL" id="AE017143">
    <property type="protein sequence ID" value="AAP95353.1"/>
    <property type="molecule type" value="Genomic_DNA"/>
</dbReference>
<dbReference type="RefSeq" id="WP_010944406.1">
    <property type="nucleotide sequence ID" value="NC_002940.2"/>
</dbReference>
<dbReference type="SMR" id="Q7VNU5"/>
<dbReference type="STRING" id="233412.HD_0383"/>
<dbReference type="GeneID" id="60733723"/>
<dbReference type="KEGG" id="hdu:HD_0383"/>
<dbReference type="eggNOG" id="COG2209">
    <property type="taxonomic scope" value="Bacteria"/>
</dbReference>
<dbReference type="HOGENOM" id="CLU_095255_0_0_6"/>
<dbReference type="OrthoDB" id="9803631at2"/>
<dbReference type="Proteomes" id="UP000001022">
    <property type="component" value="Chromosome"/>
</dbReference>
<dbReference type="GO" id="GO:0009276">
    <property type="term" value="C:Gram-negative-bacterium-type cell wall"/>
    <property type="evidence" value="ECO:0007669"/>
    <property type="project" value="InterPro"/>
</dbReference>
<dbReference type="GO" id="GO:0005886">
    <property type="term" value="C:plasma membrane"/>
    <property type="evidence" value="ECO:0007669"/>
    <property type="project" value="UniProtKB-SubCell"/>
</dbReference>
<dbReference type="GO" id="GO:0016655">
    <property type="term" value="F:oxidoreductase activity, acting on NAD(P)H, quinone or similar compound as acceptor"/>
    <property type="evidence" value="ECO:0007669"/>
    <property type="project" value="UniProtKB-UniRule"/>
</dbReference>
<dbReference type="GO" id="GO:0022904">
    <property type="term" value="P:respiratory electron transport chain"/>
    <property type="evidence" value="ECO:0007669"/>
    <property type="project" value="InterPro"/>
</dbReference>
<dbReference type="GO" id="GO:0006814">
    <property type="term" value="P:sodium ion transport"/>
    <property type="evidence" value="ECO:0007669"/>
    <property type="project" value="UniProtKB-UniRule"/>
</dbReference>
<dbReference type="HAMAP" id="MF_00429">
    <property type="entry name" value="NqrE"/>
    <property type="match status" value="1"/>
</dbReference>
<dbReference type="InterPro" id="IPR003667">
    <property type="entry name" value="NqrDE/RnfAE"/>
</dbReference>
<dbReference type="InterPro" id="IPR050133">
    <property type="entry name" value="NqrDE/RnfAE_oxidrdctase"/>
</dbReference>
<dbReference type="InterPro" id="IPR010967">
    <property type="entry name" value="NqrE"/>
</dbReference>
<dbReference type="NCBIfam" id="TIGR01940">
    <property type="entry name" value="nqrE"/>
    <property type="match status" value="1"/>
</dbReference>
<dbReference type="PANTHER" id="PTHR30335">
    <property type="entry name" value="INTEGRAL MEMBRANE PROTEIN OF SOXR-REDUCING COMPLEX"/>
    <property type="match status" value="1"/>
</dbReference>
<dbReference type="PANTHER" id="PTHR30335:SF1">
    <property type="entry name" value="NA(+)-TRANSLOCATING NADH-QUINONE REDUCTASE SUBUNIT E"/>
    <property type="match status" value="1"/>
</dbReference>
<dbReference type="Pfam" id="PF02508">
    <property type="entry name" value="Rnf-Nqr"/>
    <property type="match status" value="1"/>
</dbReference>
<dbReference type="PIRSF" id="PIRSF006102">
    <property type="entry name" value="NQR_DE"/>
    <property type="match status" value="1"/>
</dbReference>
<comment type="function">
    <text evidence="1">NQR complex catalyzes the reduction of ubiquinone-1 to ubiquinol by two successive reactions, coupled with the transport of Na(+) ions from the cytoplasm to the periplasm. NqrA to NqrE are probably involved in the second step, the conversion of ubisemiquinone to ubiquinol.</text>
</comment>
<comment type="catalytic activity">
    <reaction evidence="1">
        <text>a ubiquinone + n Na(+)(in) + NADH + H(+) = a ubiquinol + n Na(+)(out) + NAD(+)</text>
        <dbReference type="Rhea" id="RHEA:47748"/>
        <dbReference type="Rhea" id="RHEA-COMP:9565"/>
        <dbReference type="Rhea" id="RHEA-COMP:9566"/>
        <dbReference type="ChEBI" id="CHEBI:15378"/>
        <dbReference type="ChEBI" id="CHEBI:16389"/>
        <dbReference type="ChEBI" id="CHEBI:17976"/>
        <dbReference type="ChEBI" id="CHEBI:29101"/>
        <dbReference type="ChEBI" id="CHEBI:57540"/>
        <dbReference type="ChEBI" id="CHEBI:57945"/>
        <dbReference type="EC" id="7.2.1.1"/>
    </reaction>
</comment>
<comment type="subunit">
    <text evidence="1">Composed of six subunits; NqrA, NqrB, NqrC, NqrD, NqrE and NqrF.</text>
</comment>
<comment type="subcellular location">
    <subcellularLocation>
        <location evidence="1">Cell inner membrane</location>
        <topology evidence="1">Multi-pass membrane protein</topology>
    </subcellularLocation>
</comment>
<comment type="similarity">
    <text evidence="1">Belongs to the NqrDE/RnfAE family.</text>
</comment>
<keyword id="KW-0997">Cell inner membrane</keyword>
<keyword id="KW-1003">Cell membrane</keyword>
<keyword id="KW-0406">Ion transport</keyword>
<keyword id="KW-0472">Membrane</keyword>
<keyword id="KW-0520">NAD</keyword>
<keyword id="KW-1185">Reference proteome</keyword>
<keyword id="KW-0915">Sodium</keyword>
<keyword id="KW-0739">Sodium transport</keyword>
<keyword id="KW-1278">Translocase</keyword>
<keyword id="KW-0812">Transmembrane</keyword>
<keyword id="KW-1133">Transmembrane helix</keyword>
<keyword id="KW-0813">Transport</keyword>
<keyword id="KW-0830">Ubiquinone</keyword>
<protein>
    <recommendedName>
        <fullName evidence="1">Na(+)-translocating NADH-quinone reductase subunit E</fullName>
        <shortName evidence="1">Na(+)-NQR subunit E</shortName>
        <shortName evidence="1">Na(+)-translocating NQR subunit E</shortName>
        <ecNumber evidence="1">7.2.1.1</ecNumber>
    </recommendedName>
    <alternativeName>
        <fullName evidence="1">NQR complex subunit E</fullName>
    </alternativeName>
    <alternativeName>
        <fullName evidence="1">NQR-1 subunit E</fullName>
    </alternativeName>
</protein>
<sequence>MEHLLSIFVKSVFIENMALSFFLGMCTFLAVSKKVSTAFGLGIAVIVVLGIAVPVNQLVYTHILKDGVLVDGVDLSFLNFITFIGVIAALVQILEMILDKFFPALYSALGIFLPLITVNCAIFGGVSFMVQREYDLVESVVYGIGAGTGWMLAIVALAGLTEKMKYSDVPAGLRGLGITFITVGLMALGFMSFSGIQL</sequence>
<reference key="1">
    <citation type="submission" date="2003-06" db="EMBL/GenBank/DDBJ databases">
        <title>The complete genome sequence of Haemophilus ducreyi.</title>
        <authorList>
            <person name="Munson R.S. Jr."/>
            <person name="Ray W.C."/>
            <person name="Mahairas G."/>
            <person name="Sabo P."/>
            <person name="Mungur R."/>
            <person name="Johnson L."/>
            <person name="Nguyen D."/>
            <person name="Wang J."/>
            <person name="Forst C."/>
            <person name="Hood L."/>
        </authorList>
    </citation>
    <scope>NUCLEOTIDE SEQUENCE [LARGE SCALE GENOMIC DNA]</scope>
    <source>
        <strain>35000HP / ATCC 700724</strain>
    </source>
</reference>
<proteinExistence type="inferred from homology"/>
<organism>
    <name type="scientific">Haemophilus ducreyi (strain 35000HP / ATCC 700724)</name>
    <dbReference type="NCBI Taxonomy" id="233412"/>
    <lineage>
        <taxon>Bacteria</taxon>
        <taxon>Pseudomonadati</taxon>
        <taxon>Pseudomonadota</taxon>
        <taxon>Gammaproteobacteria</taxon>
        <taxon>Pasteurellales</taxon>
        <taxon>Pasteurellaceae</taxon>
        <taxon>Haemophilus</taxon>
    </lineage>
</organism>